<keyword id="KW-1185">Reference proteome</keyword>
<dbReference type="EMBL" id="AC002330">
    <property type="status" value="NOT_ANNOTATED_CDS"/>
    <property type="molecule type" value="Genomic_DNA"/>
</dbReference>
<dbReference type="EMBL" id="AC004044">
    <property type="status" value="NOT_ANNOTATED_CDS"/>
    <property type="molecule type" value="Genomic_DNA"/>
</dbReference>
<dbReference type="EMBL" id="AL161494">
    <property type="status" value="NOT_ANNOTATED_CDS"/>
    <property type="molecule type" value="Genomic_DNA"/>
</dbReference>
<dbReference type="EMBL" id="CP002687">
    <property type="protein sequence ID" value="AEE82222.1"/>
    <property type="molecule type" value="Genomic_DNA"/>
</dbReference>
<dbReference type="EMBL" id="DQ487575">
    <property type="protein sequence ID" value="ABF59237.1"/>
    <property type="molecule type" value="mRNA"/>
</dbReference>
<dbReference type="EMBL" id="EF182883">
    <property type="status" value="NOT_ANNOTATED_CDS"/>
    <property type="molecule type" value="mRNA"/>
</dbReference>
<dbReference type="RefSeq" id="NP_001031579.1">
    <property type="nucleotide sequence ID" value="NM_001036502.2"/>
</dbReference>
<dbReference type="SMR" id="Q2V3L6"/>
<dbReference type="STRING" id="3702.Q2V3L6"/>
<dbReference type="PaxDb" id="3702-AT4G02733.1"/>
<dbReference type="EnsemblPlants" id="AT4G02733.1">
    <property type="protein sequence ID" value="AT4G02733.1"/>
    <property type="gene ID" value="AT4G02733"/>
</dbReference>
<dbReference type="GeneID" id="3770467"/>
<dbReference type="Gramene" id="AT4G02733.1">
    <property type="protein sequence ID" value="AT4G02733.1"/>
    <property type="gene ID" value="AT4G02733"/>
</dbReference>
<dbReference type="KEGG" id="ath:AT4G02733"/>
<dbReference type="Araport" id="AT4G02733"/>
<dbReference type="TAIR" id="AT4G02733"/>
<dbReference type="eggNOG" id="KOG4341">
    <property type="taxonomic scope" value="Eukaryota"/>
</dbReference>
<dbReference type="HOGENOM" id="CLU_925432_0_0_1"/>
<dbReference type="InParanoid" id="Q2V3L6"/>
<dbReference type="OMA" id="WWGFLYF"/>
<dbReference type="PhylomeDB" id="Q2V3L6"/>
<dbReference type="PRO" id="PR:Q2V3L6"/>
<dbReference type="Proteomes" id="UP000006548">
    <property type="component" value="Chromosome 4"/>
</dbReference>
<dbReference type="ExpressionAtlas" id="Q2V3L6">
    <property type="expression patterns" value="baseline"/>
</dbReference>
<dbReference type="Gene3D" id="3.80.10.10">
    <property type="entry name" value="Ribonuclease Inhibitor"/>
    <property type="match status" value="1"/>
</dbReference>
<dbReference type="InterPro" id="IPR036047">
    <property type="entry name" value="F-box-like_dom_sf"/>
</dbReference>
<dbReference type="InterPro" id="IPR001810">
    <property type="entry name" value="F-box_dom"/>
</dbReference>
<dbReference type="InterPro" id="IPR032675">
    <property type="entry name" value="LRR_dom_sf"/>
</dbReference>
<dbReference type="Pfam" id="PF12937">
    <property type="entry name" value="F-box-like"/>
    <property type="match status" value="1"/>
</dbReference>
<dbReference type="SUPFAM" id="SSF81383">
    <property type="entry name" value="F-box domain"/>
    <property type="match status" value="1"/>
</dbReference>
<protein>
    <recommendedName>
        <fullName>F-box protein At4g02733</fullName>
    </recommendedName>
</protein>
<accession>Q2V3L6</accession>
<gene>
    <name type="ordered locus">At4g02733</name>
    <name type="ORF">T10P11</name>
    <name type="ORF">T5J8</name>
</gene>
<reference key="1">
    <citation type="journal article" date="1999" name="Nature">
        <title>Sequence and analysis of chromosome 4 of the plant Arabidopsis thaliana.</title>
        <authorList>
            <person name="Mayer K.F.X."/>
            <person name="Schueller C."/>
            <person name="Wambutt R."/>
            <person name="Murphy G."/>
            <person name="Volckaert G."/>
            <person name="Pohl T."/>
            <person name="Duesterhoeft A."/>
            <person name="Stiekema W."/>
            <person name="Entian K.-D."/>
            <person name="Terryn N."/>
            <person name="Harris B."/>
            <person name="Ansorge W."/>
            <person name="Brandt P."/>
            <person name="Grivell L.A."/>
            <person name="Rieger M."/>
            <person name="Weichselgartner M."/>
            <person name="de Simone V."/>
            <person name="Obermaier B."/>
            <person name="Mache R."/>
            <person name="Mueller M."/>
            <person name="Kreis M."/>
            <person name="Delseny M."/>
            <person name="Puigdomenech P."/>
            <person name="Watson M."/>
            <person name="Schmidtheini T."/>
            <person name="Reichert B."/>
            <person name="Portetelle D."/>
            <person name="Perez-Alonso M."/>
            <person name="Boutry M."/>
            <person name="Bancroft I."/>
            <person name="Vos P."/>
            <person name="Hoheisel J."/>
            <person name="Zimmermann W."/>
            <person name="Wedler H."/>
            <person name="Ridley P."/>
            <person name="Langham S.-A."/>
            <person name="McCullagh B."/>
            <person name="Bilham L."/>
            <person name="Robben J."/>
            <person name="van der Schueren J."/>
            <person name="Grymonprez B."/>
            <person name="Chuang Y.-J."/>
            <person name="Vandenbussche F."/>
            <person name="Braeken M."/>
            <person name="Weltjens I."/>
            <person name="Voet M."/>
            <person name="Bastiaens I."/>
            <person name="Aert R."/>
            <person name="Defoor E."/>
            <person name="Weitzenegger T."/>
            <person name="Bothe G."/>
            <person name="Ramsperger U."/>
            <person name="Hilbert H."/>
            <person name="Braun M."/>
            <person name="Holzer E."/>
            <person name="Brandt A."/>
            <person name="Peters S."/>
            <person name="van Staveren M."/>
            <person name="Dirkse W."/>
            <person name="Mooijman P."/>
            <person name="Klein Lankhorst R."/>
            <person name="Rose M."/>
            <person name="Hauf J."/>
            <person name="Koetter P."/>
            <person name="Berneiser S."/>
            <person name="Hempel S."/>
            <person name="Feldpausch M."/>
            <person name="Lamberth S."/>
            <person name="Van den Daele H."/>
            <person name="De Keyser A."/>
            <person name="Buysshaert C."/>
            <person name="Gielen J."/>
            <person name="Villarroel R."/>
            <person name="De Clercq R."/>
            <person name="van Montagu M."/>
            <person name="Rogers J."/>
            <person name="Cronin A."/>
            <person name="Quail M.A."/>
            <person name="Bray-Allen S."/>
            <person name="Clark L."/>
            <person name="Doggett J."/>
            <person name="Hall S."/>
            <person name="Kay M."/>
            <person name="Lennard N."/>
            <person name="McLay K."/>
            <person name="Mayes R."/>
            <person name="Pettett A."/>
            <person name="Rajandream M.A."/>
            <person name="Lyne M."/>
            <person name="Benes V."/>
            <person name="Rechmann S."/>
            <person name="Borkova D."/>
            <person name="Bloecker H."/>
            <person name="Scharfe M."/>
            <person name="Grimm M."/>
            <person name="Loehnert T.-H."/>
            <person name="Dose S."/>
            <person name="de Haan M."/>
            <person name="Maarse A.C."/>
            <person name="Schaefer M."/>
            <person name="Mueller-Auer S."/>
            <person name="Gabel C."/>
            <person name="Fuchs M."/>
            <person name="Fartmann B."/>
            <person name="Granderath K."/>
            <person name="Dauner D."/>
            <person name="Herzl A."/>
            <person name="Neumann S."/>
            <person name="Argiriou A."/>
            <person name="Vitale D."/>
            <person name="Liguori R."/>
            <person name="Piravandi E."/>
            <person name="Massenet O."/>
            <person name="Quigley F."/>
            <person name="Clabauld G."/>
            <person name="Muendlein A."/>
            <person name="Felber R."/>
            <person name="Schnabl S."/>
            <person name="Hiller R."/>
            <person name="Schmidt W."/>
            <person name="Lecharny A."/>
            <person name="Aubourg S."/>
            <person name="Chefdor F."/>
            <person name="Cooke R."/>
            <person name="Berger C."/>
            <person name="Monfort A."/>
            <person name="Casacuberta E."/>
            <person name="Gibbons T."/>
            <person name="Weber N."/>
            <person name="Vandenbol M."/>
            <person name="Bargues M."/>
            <person name="Terol J."/>
            <person name="Torres A."/>
            <person name="Perez-Perez A."/>
            <person name="Purnelle B."/>
            <person name="Bent E."/>
            <person name="Johnson S."/>
            <person name="Tacon D."/>
            <person name="Jesse T."/>
            <person name="Heijnen L."/>
            <person name="Schwarz S."/>
            <person name="Scholler P."/>
            <person name="Heber S."/>
            <person name="Francs P."/>
            <person name="Bielke C."/>
            <person name="Frishman D."/>
            <person name="Haase D."/>
            <person name="Lemcke K."/>
            <person name="Mewes H.-W."/>
            <person name="Stocker S."/>
            <person name="Zaccaria P."/>
            <person name="Bevan M."/>
            <person name="Wilson R.K."/>
            <person name="de la Bastide M."/>
            <person name="Habermann K."/>
            <person name="Parnell L."/>
            <person name="Dedhia N."/>
            <person name="Gnoj L."/>
            <person name="Schutz K."/>
            <person name="Huang E."/>
            <person name="Spiegel L."/>
            <person name="Sekhon M."/>
            <person name="Murray J."/>
            <person name="Sheet P."/>
            <person name="Cordes M."/>
            <person name="Abu-Threideh J."/>
            <person name="Stoneking T."/>
            <person name="Kalicki J."/>
            <person name="Graves T."/>
            <person name="Harmon G."/>
            <person name="Edwards J."/>
            <person name="Latreille P."/>
            <person name="Courtney L."/>
            <person name="Cloud J."/>
            <person name="Abbott A."/>
            <person name="Scott K."/>
            <person name="Johnson D."/>
            <person name="Minx P."/>
            <person name="Bentley D."/>
            <person name="Fulton B."/>
            <person name="Miller N."/>
            <person name="Greco T."/>
            <person name="Kemp K."/>
            <person name="Kramer J."/>
            <person name="Fulton L."/>
            <person name="Mardis E."/>
            <person name="Dante M."/>
            <person name="Pepin K."/>
            <person name="Hillier L.W."/>
            <person name="Nelson J."/>
            <person name="Spieth J."/>
            <person name="Ryan E."/>
            <person name="Andrews S."/>
            <person name="Geisel C."/>
            <person name="Layman D."/>
            <person name="Du H."/>
            <person name="Ali J."/>
            <person name="Berghoff A."/>
            <person name="Jones K."/>
            <person name="Drone K."/>
            <person name="Cotton M."/>
            <person name="Joshu C."/>
            <person name="Antonoiu B."/>
            <person name="Zidanic M."/>
            <person name="Strong C."/>
            <person name="Sun H."/>
            <person name="Lamar B."/>
            <person name="Yordan C."/>
            <person name="Ma P."/>
            <person name="Zhong J."/>
            <person name="Preston R."/>
            <person name="Vil D."/>
            <person name="Shekher M."/>
            <person name="Matero A."/>
            <person name="Shah R."/>
            <person name="Swaby I.K."/>
            <person name="O'Shaughnessy A."/>
            <person name="Rodriguez M."/>
            <person name="Hoffman J."/>
            <person name="Till S."/>
            <person name="Granat S."/>
            <person name="Shohdy N."/>
            <person name="Hasegawa A."/>
            <person name="Hameed A."/>
            <person name="Lodhi M."/>
            <person name="Johnson A."/>
            <person name="Chen E."/>
            <person name="Marra M.A."/>
            <person name="Martienssen R."/>
            <person name="McCombie W.R."/>
        </authorList>
    </citation>
    <scope>NUCLEOTIDE SEQUENCE [LARGE SCALE GENOMIC DNA]</scope>
    <source>
        <strain>cv. Columbia</strain>
    </source>
</reference>
<reference key="2">
    <citation type="journal article" date="2017" name="Plant J.">
        <title>Araport11: a complete reannotation of the Arabidopsis thaliana reference genome.</title>
        <authorList>
            <person name="Cheng C.Y."/>
            <person name="Krishnakumar V."/>
            <person name="Chan A.P."/>
            <person name="Thibaud-Nissen F."/>
            <person name="Schobel S."/>
            <person name="Town C.D."/>
        </authorList>
    </citation>
    <scope>GENOME REANNOTATION</scope>
    <source>
        <strain>cv. Columbia</strain>
    </source>
</reference>
<reference key="3">
    <citation type="journal article" date="2006" name="Plant Biotechnol. J.">
        <title>Simultaneous high-throughput recombinational cloning of open reading frames in closed and open configurations.</title>
        <authorList>
            <person name="Underwood B.A."/>
            <person name="Vanderhaeghen R."/>
            <person name="Whitford R."/>
            <person name="Town C.D."/>
            <person name="Hilson P."/>
        </authorList>
    </citation>
    <scope>NUCLEOTIDE SEQUENCE [LARGE SCALE MRNA]</scope>
    <source>
        <strain>cv. Columbia</strain>
    </source>
</reference>
<reference key="4">
    <citation type="journal article" date="2007" name="BMC Genomics">
        <title>Experimental validation of novel genes predicted in the un-annotated regions of the Arabidopsis genome.</title>
        <authorList>
            <person name="Moskal W.A. Jr."/>
            <person name="Wu H.C."/>
            <person name="Underwood B.A."/>
            <person name="Wang W."/>
            <person name="Town C.D."/>
            <person name="Xiao Y.-L."/>
        </authorList>
    </citation>
    <scope>NUCLEOTIDE SEQUENCE [LARGE SCALE MRNA]</scope>
    <source>
        <strain>cv. Columbia</strain>
    </source>
</reference>
<name>FB343_ARATH</name>
<organism>
    <name type="scientific">Arabidopsis thaliana</name>
    <name type="common">Mouse-ear cress</name>
    <dbReference type="NCBI Taxonomy" id="3702"/>
    <lineage>
        <taxon>Eukaryota</taxon>
        <taxon>Viridiplantae</taxon>
        <taxon>Streptophyta</taxon>
        <taxon>Embryophyta</taxon>
        <taxon>Tracheophyta</taxon>
        <taxon>Spermatophyta</taxon>
        <taxon>Magnoliopsida</taxon>
        <taxon>eudicotyledons</taxon>
        <taxon>Gunneridae</taxon>
        <taxon>Pentapetalae</taxon>
        <taxon>rosids</taxon>
        <taxon>malvids</taxon>
        <taxon>Brassicales</taxon>
        <taxon>Brassicaceae</taxon>
        <taxon>Camelineae</taxon>
        <taxon>Arabidopsis</taxon>
    </lineage>
</organism>
<sequence length="301" mass="33657">MLSTENPNSSPLSDSLEFNERHLDSIISSLVTFPDSPSLSISSSFDRVLDHLLSSGDVSVQDQLVDRTLERFSLLLQSTKRCSQKRATLHNSISWFLPSELTVKVFSMVDTKSLMQASACCTMFNNCAMDPLCYFHIDLTKAFKHVDDRVLRTLLNRSGKQLRSLKLGRVDAPGCLFRSSCLPPLILYGNNARRALKLGRDPPGLGSLFTRSCFDPLKLTGNLLTSLHIYSLGFMNMNSFLDPLSACSNLTDLKIVGVNVLLEPILELLARNCCLIEHLFLDNCSQGKTFTWWGFLYFTVA</sequence>
<proteinExistence type="evidence at transcript level"/>
<feature type="chain" id="PRO_0000396059" description="F-box protein At4g02733">
    <location>
        <begin position="1"/>
        <end position="301"/>
    </location>
</feature>
<feature type="domain" description="F-box">
    <location>
        <begin position="91"/>
        <end position="146"/>
    </location>
</feature>